<evidence type="ECO:0000255" key="1">
    <source>
        <dbReference type="HAMAP-Rule" id="MF_00300"/>
    </source>
</evidence>
<accession>Q2A549</accession>
<dbReference type="EC" id="4.2.3.5" evidence="1"/>
<dbReference type="EMBL" id="AM233362">
    <property type="protein sequence ID" value="CAJ78817.1"/>
    <property type="molecule type" value="Genomic_DNA"/>
</dbReference>
<dbReference type="RefSeq" id="WP_003014579.1">
    <property type="nucleotide sequence ID" value="NZ_CP009694.1"/>
</dbReference>
<dbReference type="SMR" id="Q2A549"/>
<dbReference type="KEGG" id="ftl:FTL_0377"/>
<dbReference type="UniPathway" id="UPA00053">
    <property type="reaction ID" value="UER00090"/>
</dbReference>
<dbReference type="Proteomes" id="UP000001944">
    <property type="component" value="Chromosome"/>
</dbReference>
<dbReference type="GO" id="GO:0005829">
    <property type="term" value="C:cytosol"/>
    <property type="evidence" value="ECO:0007669"/>
    <property type="project" value="TreeGrafter"/>
</dbReference>
<dbReference type="GO" id="GO:0004107">
    <property type="term" value="F:chorismate synthase activity"/>
    <property type="evidence" value="ECO:0007669"/>
    <property type="project" value="UniProtKB-UniRule"/>
</dbReference>
<dbReference type="GO" id="GO:0010181">
    <property type="term" value="F:FMN binding"/>
    <property type="evidence" value="ECO:0007669"/>
    <property type="project" value="TreeGrafter"/>
</dbReference>
<dbReference type="GO" id="GO:0008652">
    <property type="term" value="P:amino acid biosynthetic process"/>
    <property type="evidence" value="ECO:0007669"/>
    <property type="project" value="UniProtKB-KW"/>
</dbReference>
<dbReference type="GO" id="GO:0009073">
    <property type="term" value="P:aromatic amino acid family biosynthetic process"/>
    <property type="evidence" value="ECO:0007669"/>
    <property type="project" value="UniProtKB-KW"/>
</dbReference>
<dbReference type="GO" id="GO:0009423">
    <property type="term" value="P:chorismate biosynthetic process"/>
    <property type="evidence" value="ECO:0007669"/>
    <property type="project" value="UniProtKB-UniRule"/>
</dbReference>
<dbReference type="CDD" id="cd07304">
    <property type="entry name" value="Chorismate_synthase"/>
    <property type="match status" value="1"/>
</dbReference>
<dbReference type="Gene3D" id="3.60.150.10">
    <property type="entry name" value="Chorismate synthase AroC"/>
    <property type="match status" value="1"/>
</dbReference>
<dbReference type="HAMAP" id="MF_00300">
    <property type="entry name" value="Chorismate_synth"/>
    <property type="match status" value="1"/>
</dbReference>
<dbReference type="InterPro" id="IPR000453">
    <property type="entry name" value="Chorismate_synth"/>
</dbReference>
<dbReference type="InterPro" id="IPR035904">
    <property type="entry name" value="Chorismate_synth_AroC_sf"/>
</dbReference>
<dbReference type="InterPro" id="IPR020541">
    <property type="entry name" value="Chorismate_synthase_CS"/>
</dbReference>
<dbReference type="NCBIfam" id="TIGR00033">
    <property type="entry name" value="aroC"/>
    <property type="match status" value="1"/>
</dbReference>
<dbReference type="NCBIfam" id="NF003793">
    <property type="entry name" value="PRK05382.1"/>
    <property type="match status" value="1"/>
</dbReference>
<dbReference type="PANTHER" id="PTHR21085">
    <property type="entry name" value="CHORISMATE SYNTHASE"/>
    <property type="match status" value="1"/>
</dbReference>
<dbReference type="PANTHER" id="PTHR21085:SF0">
    <property type="entry name" value="CHORISMATE SYNTHASE"/>
    <property type="match status" value="1"/>
</dbReference>
<dbReference type="Pfam" id="PF01264">
    <property type="entry name" value="Chorismate_synt"/>
    <property type="match status" value="1"/>
</dbReference>
<dbReference type="PIRSF" id="PIRSF001456">
    <property type="entry name" value="Chorismate_synth"/>
    <property type="match status" value="1"/>
</dbReference>
<dbReference type="SUPFAM" id="SSF103263">
    <property type="entry name" value="Chorismate synthase, AroC"/>
    <property type="match status" value="1"/>
</dbReference>
<dbReference type="PROSITE" id="PS00787">
    <property type="entry name" value="CHORISMATE_SYNTHASE_1"/>
    <property type="match status" value="1"/>
</dbReference>
<dbReference type="PROSITE" id="PS00788">
    <property type="entry name" value="CHORISMATE_SYNTHASE_2"/>
    <property type="match status" value="1"/>
</dbReference>
<dbReference type="PROSITE" id="PS00789">
    <property type="entry name" value="CHORISMATE_SYNTHASE_3"/>
    <property type="match status" value="1"/>
</dbReference>
<comment type="function">
    <text evidence="1">Catalyzes the anti-1,4-elimination of the C-3 phosphate and the C-6 proR hydrogen from 5-enolpyruvylshikimate-3-phosphate (EPSP) to yield chorismate, which is the branch point compound that serves as the starting substrate for the three terminal pathways of aromatic amino acid biosynthesis. This reaction introduces a second double bond into the aromatic ring system.</text>
</comment>
<comment type="catalytic activity">
    <reaction evidence="1">
        <text>5-O-(1-carboxyvinyl)-3-phosphoshikimate = chorismate + phosphate</text>
        <dbReference type="Rhea" id="RHEA:21020"/>
        <dbReference type="ChEBI" id="CHEBI:29748"/>
        <dbReference type="ChEBI" id="CHEBI:43474"/>
        <dbReference type="ChEBI" id="CHEBI:57701"/>
        <dbReference type="EC" id="4.2.3.5"/>
    </reaction>
</comment>
<comment type="cofactor">
    <cofactor evidence="1">
        <name>FMNH2</name>
        <dbReference type="ChEBI" id="CHEBI:57618"/>
    </cofactor>
    <text evidence="1">Reduced FMN (FMNH(2)).</text>
</comment>
<comment type="pathway">
    <text evidence="1">Metabolic intermediate biosynthesis; chorismate biosynthesis; chorismate from D-erythrose 4-phosphate and phosphoenolpyruvate: step 7/7.</text>
</comment>
<comment type="subunit">
    <text evidence="1">Homotetramer.</text>
</comment>
<comment type="similarity">
    <text evidence="1">Belongs to the chorismate synthase family.</text>
</comment>
<proteinExistence type="inferred from homology"/>
<organism>
    <name type="scientific">Francisella tularensis subsp. holarctica (strain LVS)</name>
    <dbReference type="NCBI Taxonomy" id="376619"/>
    <lineage>
        <taxon>Bacteria</taxon>
        <taxon>Pseudomonadati</taxon>
        <taxon>Pseudomonadota</taxon>
        <taxon>Gammaproteobacteria</taxon>
        <taxon>Thiotrichales</taxon>
        <taxon>Francisellaceae</taxon>
        <taxon>Francisella</taxon>
    </lineage>
</organism>
<protein>
    <recommendedName>
        <fullName evidence="1">Chorismate synthase</fullName>
        <shortName evidence="1">CS</shortName>
        <ecNumber evidence="1">4.2.3.5</ecNumber>
    </recommendedName>
    <alternativeName>
        <fullName evidence="1">5-enolpyruvylshikimate-3-phosphate phospholyase</fullName>
    </alternativeName>
</protein>
<sequence length="352" mass="38068">MSGNTFGKIFTVTTCGESHGDSLAAIIDGCPSNIPLCEAYIQLELDRRKPGQSKFTTQRKEPDEVKIISGVFEGKTTGTPIGLIIKNQDQKSKDYSEIKDKFRPGHADYTYFKKYGIRDYRGGGRSSARETAMRVAAGAIAKKILKHYGIEIYGFCSQIGSLKIDFIDKDFINQNPFFIANKNAVPACEDLIHSIRKQGDSIGAEVTVVATGLEAGLGRPVFDRLDASIAYAMMSINAVKAVSIGDGFDCVAQKGSQHRDEITQQQGFLSNHAGGILGGISTGQDIIAKLAFKPTSSILQPGKSIDVQGNDTTVITKGRHDPCVGIRGVPIAEAMLALVLVDELLITRSYRD</sequence>
<keyword id="KW-0028">Amino-acid biosynthesis</keyword>
<keyword id="KW-0057">Aromatic amino acid biosynthesis</keyword>
<keyword id="KW-0274">FAD</keyword>
<keyword id="KW-0285">Flavoprotein</keyword>
<keyword id="KW-0288">FMN</keyword>
<keyword id="KW-0456">Lyase</keyword>
<keyword id="KW-0521">NADP</keyword>
<keyword id="KW-1185">Reference proteome</keyword>
<name>AROC_FRATH</name>
<feature type="chain" id="PRO_0000256294" description="Chorismate synthase">
    <location>
        <begin position="1"/>
        <end position="352"/>
    </location>
</feature>
<feature type="binding site" evidence="1">
    <location>
        <position position="48"/>
    </location>
    <ligand>
        <name>NADP(+)</name>
        <dbReference type="ChEBI" id="CHEBI:58349"/>
    </ligand>
</feature>
<feature type="binding site" evidence="1">
    <location>
        <begin position="125"/>
        <end position="127"/>
    </location>
    <ligand>
        <name>FMN</name>
        <dbReference type="ChEBI" id="CHEBI:58210"/>
    </ligand>
</feature>
<feature type="binding site" evidence="1">
    <location>
        <begin position="237"/>
        <end position="238"/>
    </location>
    <ligand>
        <name>FMN</name>
        <dbReference type="ChEBI" id="CHEBI:58210"/>
    </ligand>
</feature>
<feature type="binding site" evidence="1">
    <location>
        <position position="278"/>
    </location>
    <ligand>
        <name>FMN</name>
        <dbReference type="ChEBI" id="CHEBI:58210"/>
    </ligand>
</feature>
<feature type="binding site" evidence="1">
    <location>
        <begin position="293"/>
        <end position="297"/>
    </location>
    <ligand>
        <name>FMN</name>
        <dbReference type="ChEBI" id="CHEBI:58210"/>
    </ligand>
</feature>
<feature type="binding site" evidence="1">
    <location>
        <position position="319"/>
    </location>
    <ligand>
        <name>FMN</name>
        <dbReference type="ChEBI" id="CHEBI:58210"/>
    </ligand>
</feature>
<gene>
    <name evidence="1" type="primary">aroC</name>
    <name type="ordered locus">FTL_0377</name>
</gene>
<reference key="1">
    <citation type="submission" date="2006-03" db="EMBL/GenBank/DDBJ databases">
        <title>Complete genome sequence of Francisella tularensis LVS (Live Vaccine Strain).</title>
        <authorList>
            <person name="Chain P."/>
            <person name="Larimer F."/>
            <person name="Land M."/>
            <person name="Stilwagen S."/>
            <person name="Larsson P."/>
            <person name="Bearden S."/>
            <person name="Chu M."/>
            <person name="Oyston P."/>
            <person name="Forsman M."/>
            <person name="Andersson S."/>
            <person name="Lindler L."/>
            <person name="Titball R."/>
            <person name="Garcia E."/>
        </authorList>
    </citation>
    <scope>NUCLEOTIDE SEQUENCE [LARGE SCALE GENOMIC DNA]</scope>
    <source>
        <strain>LVS</strain>
    </source>
</reference>